<gene>
    <name type="ORF">CG1552</name>
</gene>
<feature type="signal peptide" evidence="1">
    <location>
        <begin position="1"/>
        <end position="20"/>
    </location>
</feature>
<feature type="chain" id="PRO_0000326432" description="Uncharacterized protein CG1552">
    <location>
        <begin position="21"/>
        <end position="184"/>
    </location>
</feature>
<feature type="splice variant" id="VSP_052717" description="In isoform B." evidence="5">
    <original>RSIFVVEKMSRPND</original>
    <variation>S</variation>
    <location>
        <begin position="88"/>
        <end position="101"/>
    </location>
</feature>
<feature type="sequence variant" description="In RNA edited version." evidence="4">
    <original>K</original>
    <variation>R</variation>
    <location>
        <position position="121"/>
    </location>
</feature>
<proteinExistence type="evidence at transcript level"/>
<organism>
    <name type="scientific">Drosophila melanogaster</name>
    <name type="common">Fruit fly</name>
    <dbReference type="NCBI Taxonomy" id="7227"/>
    <lineage>
        <taxon>Eukaryota</taxon>
        <taxon>Metazoa</taxon>
        <taxon>Ecdysozoa</taxon>
        <taxon>Arthropoda</taxon>
        <taxon>Hexapoda</taxon>
        <taxon>Insecta</taxon>
        <taxon>Pterygota</taxon>
        <taxon>Neoptera</taxon>
        <taxon>Endopterygota</taxon>
        <taxon>Diptera</taxon>
        <taxon>Brachycera</taxon>
        <taxon>Muscomorpha</taxon>
        <taxon>Ephydroidea</taxon>
        <taxon>Drosophilidae</taxon>
        <taxon>Drosophila</taxon>
        <taxon>Sophophora</taxon>
    </lineage>
</organism>
<dbReference type="EMBL" id="AE014298">
    <property type="protein sequence ID" value="AAF47988.1"/>
    <property type="molecule type" value="Genomic_DNA"/>
</dbReference>
<dbReference type="EMBL" id="AE014298">
    <property type="protein sequence ID" value="AAN09279.1"/>
    <property type="molecule type" value="Genomic_DNA"/>
</dbReference>
<dbReference type="EMBL" id="AY058380">
    <property type="protein sequence ID" value="AAL13609.1"/>
    <property type="molecule type" value="mRNA"/>
</dbReference>
<dbReference type="RefSeq" id="NP_001285104.1">
    <molecule id="Q9VZ40-1"/>
    <property type="nucleotide sequence ID" value="NM_001298175.1"/>
</dbReference>
<dbReference type="RefSeq" id="NP_572676.2">
    <molecule id="Q9VZ40-1"/>
    <property type="nucleotide sequence ID" value="NM_132448.4"/>
</dbReference>
<dbReference type="RefSeq" id="NP_727479.1">
    <molecule id="Q9VZ40-2"/>
    <property type="nucleotide sequence ID" value="NM_167263.3"/>
</dbReference>
<dbReference type="BioGRID" id="58450">
    <property type="interactions" value="1"/>
</dbReference>
<dbReference type="FunCoup" id="Q9VZ40">
    <property type="interactions" value="134"/>
</dbReference>
<dbReference type="STRING" id="7227.FBpp0312029"/>
<dbReference type="PaxDb" id="7227-FBpp0073252"/>
<dbReference type="DNASU" id="32035"/>
<dbReference type="EnsemblMetazoa" id="FBtr0073396">
    <molecule id="Q9VZ40-1"/>
    <property type="protein sequence ID" value="FBpp0073252"/>
    <property type="gene ID" value="FBgn0030258"/>
</dbReference>
<dbReference type="EnsemblMetazoa" id="FBtr0073397">
    <molecule id="Q9VZ40-2"/>
    <property type="protein sequence ID" value="FBpp0073253"/>
    <property type="gene ID" value="FBgn0030258"/>
</dbReference>
<dbReference type="EnsemblMetazoa" id="FBtr0346272">
    <molecule id="Q9VZ40-1"/>
    <property type="protein sequence ID" value="FBpp0312029"/>
    <property type="gene ID" value="FBgn0030258"/>
</dbReference>
<dbReference type="GeneID" id="32035"/>
<dbReference type="KEGG" id="dme:Dmel_CG1552"/>
<dbReference type="UCSC" id="CG1552-RA">
    <molecule id="Q9VZ40-1"/>
    <property type="organism name" value="d. melanogaster"/>
</dbReference>
<dbReference type="AGR" id="FB:FBgn0030258"/>
<dbReference type="FlyBase" id="FBgn0030258">
    <property type="gene designation" value="CG1552"/>
</dbReference>
<dbReference type="VEuPathDB" id="VectorBase:FBgn0030258"/>
<dbReference type="eggNOG" id="ENOG502R0ZG">
    <property type="taxonomic scope" value="Eukaryota"/>
</dbReference>
<dbReference type="InParanoid" id="Q9VZ40"/>
<dbReference type="OMA" id="QIMPRSR"/>
<dbReference type="OrthoDB" id="7824617at2759"/>
<dbReference type="PhylomeDB" id="Q9VZ40"/>
<dbReference type="BioGRID-ORCS" id="32035">
    <property type="hits" value="0 hits in 1 CRISPR screen"/>
</dbReference>
<dbReference type="ChiTaRS" id="CG1552">
    <property type="organism name" value="fly"/>
</dbReference>
<dbReference type="GenomeRNAi" id="32035"/>
<dbReference type="PRO" id="PR:Q9VZ40"/>
<dbReference type="Proteomes" id="UP000000803">
    <property type="component" value="Chromosome X"/>
</dbReference>
<dbReference type="Bgee" id="FBgn0030258">
    <property type="expression patterns" value="Expressed in reticular neuropil associated glial cell (Drosophila) in brain and 95 other cell types or tissues"/>
</dbReference>
<dbReference type="ExpressionAtlas" id="Q9VZ40">
    <property type="expression patterns" value="baseline and differential"/>
</dbReference>
<dbReference type="GO" id="GO:0005615">
    <property type="term" value="C:extracellular space"/>
    <property type="evidence" value="ECO:0000255"/>
    <property type="project" value="FlyBase"/>
</dbReference>
<keyword id="KW-0025">Alternative splicing</keyword>
<keyword id="KW-1185">Reference proteome</keyword>
<keyword id="KW-0691">RNA editing</keyword>
<keyword id="KW-0732">Signal</keyword>
<accession>Q9VZ40</accession>
<accession>Q8IR96</accession>
<accession>Q95U12</accession>
<name>Y1552_DROME</name>
<protein>
    <recommendedName>
        <fullName>Uncharacterized protein CG1552</fullName>
    </recommendedName>
</protein>
<reference evidence="7" key="1">
    <citation type="journal article" date="2000" name="Science">
        <title>The genome sequence of Drosophila melanogaster.</title>
        <authorList>
            <person name="Adams M.D."/>
            <person name="Celniker S.E."/>
            <person name="Holt R.A."/>
            <person name="Evans C.A."/>
            <person name="Gocayne J.D."/>
            <person name="Amanatides P.G."/>
            <person name="Scherer S.E."/>
            <person name="Li P.W."/>
            <person name="Hoskins R.A."/>
            <person name="Galle R.F."/>
            <person name="George R.A."/>
            <person name="Lewis S.E."/>
            <person name="Richards S."/>
            <person name="Ashburner M."/>
            <person name="Henderson S.N."/>
            <person name="Sutton G.G."/>
            <person name="Wortman J.R."/>
            <person name="Yandell M.D."/>
            <person name="Zhang Q."/>
            <person name="Chen L.X."/>
            <person name="Brandon R.C."/>
            <person name="Rogers Y.-H.C."/>
            <person name="Blazej R.G."/>
            <person name="Champe M."/>
            <person name="Pfeiffer B.D."/>
            <person name="Wan K.H."/>
            <person name="Doyle C."/>
            <person name="Baxter E.G."/>
            <person name="Helt G."/>
            <person name="Nelson C.R."/>
            <person name="Miklos G.L.G."/>
            <person name="Abril J.F."/>
            <person name="Agbayani A."/>
            <person name="An H.-J."/>
            <person name="Andrews-Pfannkoch C."/>
            <person name="Baldwin D."/>
            <person name="Ballew R.M."/>
            <person name="Basu A."/>
            <person name="Baxendale J."/>
            <person name="Bayraktaroglu L."/>
            <person name="Beasley E.M."/>
            <person name="Beeson K.Y."/>
            <person name="Benos P.V."/>
            <person name="Berman B.P."/>
            <person name="Bhandari D."/>
            <person name="Bolshakov S."/>
            <person name="Borkova D."/>
            <person name="Botchan M.R."/>
            <person name="Bouck J."/>
            <person name="Brokstein P."/>
            <person name="Brottier P."/>
            <person name="Burtis K.C."/>
            <person name="Busam D.A."/>
            <person name="Butler H."/>
            <person name="Cadieu E."/>
            <person name="Center A."/>
            <person name="Chandra I."/>
            <person name="Cherry J.M."/>
            <person name="Cawley S."/>
            <person name="Dahlke C."/>
            <person name="Davenport L.B."/>
            <person name="Davies P."/>
            <person name="de Pablos B."/>
            <person name="Delcher A."/>
            <person name="Deng Z."/>
            <person name="Mays A.D."/>
            <person name="Dew I."/>
            <person name="Dietz S.M."/>
            <person name="Dodson K."/>
            <person name="Doup L.E."/>
            <person name="Downes M."/>
            <person name="Dugan-Rocha S."/>
            <person name="Dunkov B.C."/>
            <person name="Dunn P."/>
            <person name="Durbin K.J."/>
            <person name="Evangelista C.C."/>
            <person name="Ferraz C."/>
            <person name="Ferriera S."/>
            <person name="Fleischmann W."/>
            <person name="Fosler C."/>
            <person name="Gabrielian A.E."/>
            <person name="Garg N.S."/>
            <person name="Gelbart W.M."/>
            <person name="Glasser K."/>
            <person name="Glodek A."/>
            <person name="Gong F."/>
            <person name="Gorrell J.H."/>
            <person name="Gu Z."/>
            <person name="Guan P."/>
            <person name="Harris M."/>
            <person name="Harris N.L."/>
            <person name="Harvey D.A."/>
            <person name="Heiman T.J."/>
            <person name="Hernandez J.R."/>
            <person name="Houck J."/>
            <person name="Hostin D."/>
            <person name="Houston K.A."/>
            <person name="Howland T.J."/>
            <person name="Wei M.-H."/>
            <person name="Ibegwam C."/>
            <person name="Jalali M."/>
            <person name="Kalush F."/>
            <person name="Karpen G.H."/>
            <person name="Ke Z."/>
            <person name="Kennison J.A."/>
            <person name="Ketchum K.A."/>
            <person name="Kimmel B.E."/>
            <person name="Kodira C.D."/>
            <person name="Kraft C.L."/>
            <person name="Kravitz S."/>
            <person name="Kulp D."/>
            <person name="Lai Z."/>
            <person name="Lasko P."/>
            <person name="Lei Y."/>
            <person name="Levitsky A.A."/>
            <person name="Li J.H."/>
            <person name="Li Z."/>
            <person name="Liang Y."/>
            <person name="Lin X."/>
            <person name="Liu X."/>
            <person name="Mattei B."/>
            <person name="McIntosh T.C."/>
            <person name="McLeod M.P."/>
            <person name="McPherson D."/>
            <person name="Merkulov G."/>
            <person name="Milshina N.V."/>
            <person name="Mobarry C."/>
            <person name="Morris J."/>
            <person name="Moshrefi A."/>
            <person name="Mount S.M."/>
            <person name="Moy M."/>
            <person name="Murphy B."/>
            <person name="Murphy L."/>
            <person name="Muzny D.M."/>
            <person name="Nelson D.L."/>
            <person name="Nelson D.R."/>
            <person name="Nelson K.A."/>
            <person name="Nixon K."/>
            <person name="Nusskern D.R."/>
            <person name="Pacleb J.M."/>
            <person name="Palazzolo M."/>
            <person name="Pittman G.S."/>
            <person name="Pan S."/>
            <person name="Pollard J."/>
            <person name="Puri V."/>
            <person name="Reese M.G."/>
            <person name="Reinert K."/>
            <person name="Remington K."/>
            <person name="Saunders R.D.C."/>
            <person name="Scheeler F."/>
            <person name="Shen H."/>
            <person name="Shue B.C."/>
            <person name="Siden-Kiamos I."/>
            <person name="Simpson M."/>
            <person name="Skupski M.P."/>
            <person name="Smith T.J."/>
            <person name="Spier E."/>
            <person name="Spradling A.C."/>
            <person name="Stapleton M."/>
            <person name="Strong R."/>
            <person name="Sun E."/>
            <person name="Svirskas R."/>
            <person name="Tector C."/>
            <person name="Turner R."/>
            <person name="Venter E."/>
            <person name="Wang A.H."/>
            <person name="Wang X."/>
            <person name="Wang Z.-Y."/>
            <person name="Wassarman D.A."/>
            <person name="Weinstock G.M."/>
            <person name="Weissenbach J."/>
            <person name="Williams S.M."/>
            <person name="Woodage T."/>
            <person name="Worley K.C."/>
            <person name="Wu D."/>
            <person name="Yang S."/>
            <person name="Yao Q.A."/>
            <person name="Ye J."/>
            <person name="Yeh R.-F."/>
            <person name="Zaveri J.S."/>
            <person name="Zhan M."/>
            <person name="Zhang G."/>
            <person name="Zhao Q."/>
            <person name="Zheng L."/>
            <person name="Zheng X.H."/>
            <person name="Zhong F.N."/>
            <person name="Zhong W."/>
            <person name="Zhou X."/>
            <person name="Zhu S.C."/>
            <person name="Zhu X."/>
            <person name="Smith H.O."/>
            <person name="Gibbs R.A."/>
            <person name="Myers E.W."/>
            <person name="Rubin G.M."/>
            <person name="Venter J.C."/>
        </authorList>
    </citation>
    <scope>NUCLEOTIDE SEQUENCE [LARGE SCALE GENOMIC DNA]</scope>
    <source>
        <strain evidence="2">Berkeley</strain>
    </source>
</reference>
<reference evidence="6 7" key="2">
    <citation type="journal article" date="2002" name="Genome Biol.">
        <title>Annotation of the Drosophila melanogaster euchromatic genome: a systematic review.</title>
        <authorList>
            <person name="Misra S."/>
            <person name="Crosby M.A."/>
            <person name="Mungall C.J."/>
            <person name="Matthews B.B."/>
            <person name="Campbell K.S."/>
            <person name="Hradecky P."/>
            <person name="Huang Y."/>
            <person name="Kaminker J.S."/>
            <person name="Millburn G.H."/>
            <person name="Prochnik S.E."/>
            <person name="Smith C.D."/>
            <person name="Tupy J.L."/>
            <person name="Whitfield E.J."/>
            <person name="Bayraktaroglu L."/>
            <person name="Berman B.P."/>
            <person name="Bettencourt B.R."/>
            <person name="Celniker S.E."/>
            <person name="de Grey A.D.N.J."/>
            <person name="Drysdale R.A."/>
            <person name="Harris N.L."/>
            <person name="Richter J."/>
            <person name="Russo S."/>
            <person name="Schroeder A.J."/>
            <person name="Shu S.Q."/>
            <person name="Stapleton M."/>
            <person name="Yamada C."/>
            <person name="Ashburner M."/>
            <person name="Gelbart W.M."/>
            <person name="Rubin G.M."/>
            <person name="Lewis S.E."/>
        </authorList>
    </citation>
    <scope>GENOME REANNOTATION</scope>
    <scope>ALTERNATIVE SPLICING</scope>
    <source>
        <strain>Berkeley</strain>
    </source>
</reference>
<reference evidence="6 8" key="3">
    <citation type="journal article" date="2002" name="Genome Biol.">
        <title>A Drosophila full-length cDNA resource.</title>
        <authorList>
            <person name="Stapleton M."/>
            <person name="Carlson J.W."/>
            <person name="Brokstein P."/>
            <person name="Yu C."/>
            <person name="Champe M."/>
            <person name="George R.A."/>
            <person name="Guarin H."/>
            <person name="Kronmiller B."/>
            <person name="Pacleb J.M."/>
            <person name="Park S."/>
            <person name="Wan K.H."/>
            <person name="Rubin G.M."/>
            <person name="Celniker S.E."/>
        </authorList>
    </citation>
    <scope>NUCLEOTIDE SEQUENCE [LARGE SCALE MRNA] (ISOFORM A)</scope>
    <scope>RNA EDITING OF POSITION 121</scope>
    <source>
        <strain>Berkeley</strain>
        <tissue evidence="3">Head</tissue>
    </source>
</reference>
<reference evidence="6" key="4">
    <citation type="journal article" date="2006" name="RNA">
        <title>RNA editing in Drosophila melanogaster: new targets and functional consequences.</title>
        <authorList>
            <person name="Stapleton M."/>
            <person name="Carlson J.W."/>
            <person name="Celniker S.E."/>
        </authorList>
    </citation>
    <scope>RNA EDITING OF POSITION 121</scope>
</reference>
<comment type="alternative products">
    <event type="alternative splicing"/>
    <isoform>
        <id>Q9VZ40-1</id>
        <name evidence="2">A</name>
        <sequence type="displayed"/>
    </isoform>
    <isoform>
        <id>Q9VZ40-2</id>
        <name evidence="2">B</name>
        <sequence type="described" ref="VSP_052717"/>
    </isoform>
</comment>
<comment type="RNA editing">
    <location>
        <position position="121" evidence="3 4"/>
    </location>
    <text evidence="4">Partially edited. Target of Adar.</text>
</comment>
<sequence>MYQLEKIWVLLCLALVGVLGFGQFHMKHYQLQRNYNTQEDSGENDNSVLRTFRRCMWEQSKFLPRRLVLLSLCSNLFCENNHIMPRSRSIFVVEKMSRPNDCLDILPEQCEQGDEEELMYKPFPDCCPVYCNLKRRMQRLRTMHFRHRLLRNKQDGSAGSAGGGSAGGDGPNNSLLSEFVYNNY</sequence>
<evidence type="ECO:0000255" key="1"/>
<evidence type="ECO:0000269" key="2">
    <source>
    </source>
</evidence>
<evidence type="ECO:0000269" key="3">
    <source>
    </source>
</evidence>
<evidence type="ECO:0000269" key="4">
    <source>
    </source>
</evidence>
<evidence type="ECO:0000303" key="5">
    <source>
    </source>
</evidence>
<evidence type="ECO:0000305" key="6"/>
<evidence type="ECO:0000312" key="7">
    <source>
        <dbReference type="EMBL" id="AAF47988.1"/>
    </source>
</evidence>
<evidence type="ECO:0000312" key="8">
    <source>
        <dbReference type="EMBL" id="AAL13609.1"/>
    </source>
</evidence>